<organism>
    <name type="scientific">Alternaria alternata</name>
    <name type="common">Alternaria rot fungus</name>
    <name type="synonym">Torula alternata</name>
    <dbReference type="NCBI Taxonomy" id="5599"/>
    <lineage>
        <taxon>Eukaryota</taxon>
        <taxon>Fungi</taxon>
        <taxon>Dikarya</taxon>
        <taxon>Ascomycota</taxon>
        <taxon>Pezizomycotina</taxon>
        <taxon>Dothideomycetes</taxon>
        <taxon>Pleosporomycetidae</taxon>
        <taxon>Pleosporales</taxon>
        <taxon>Pleosporineae</taxon>
        <taxon>Pleosporaceae</taxon>
        <taxon>Alternaria</taxon>
        <taxon>Alternaria sect. Alternaria</taxon>
        <taxon>Alternaria alternata complex</taxon>
    </lineage>
</organism>
<dbReference type="EC" id="1.14.14.1" evidence="3"/>
<dbReference type="EC" id="1.6.2.4" evidence="3"/>
<dbReference type="EMBL" id="AB969680">
    <property type="protein sequence ID" value="BBG74264.1"/>
    <property type="molecule type" value="Genomic_DNA"/>
</dbReference>
<dbReference type="SMR" id="A0A3G9HRC2"/>
<dbReference type="VEuPathDB" id="FungiDB:CC77DRAFT_1067991"/>
<dbReference type="GO" id="GO:0005829">
    <property type="term" value="C:cytosol"/>
    <property type="evidence" value="ECO:0007669"/>
    <property type="project" value="TreeGrafter"/>
</dbReference>
<dbReference type="GO" id="GO:0070330">
    <property type="term" value="F:aromatase activity"/>
    <property type="evidence" value="ECO:0007669"/>
    <property type="project" value="InterPro"/>
</dbReference>
<dbReference type="GO" id="GO:0050660">
    <property type="term" value="F:flavin adenine dinucleotide binding"/>
    <property type="evidence" value="ECO:0007669"/>
    <property type="project" value="TreeGrafter"/>
</dbReference>
<dbReference type="GO" id="GO:0010181">
    <property type="term" value="F:FMN binding"/>
    <property type="evidence" value="ECO:0007669"/>
    <property type="project" value="InterPro"/>
</dbReference>
<dbReference type="GO" id="GO:0020037">
    <property type="term" value="F:heme binding"/>
    <property type="evidence" value="ECO:0007669"/>
    <property type="project" value="InterPro"/>
</dbReference>
<dbReference type="GO" id="GO:0005506">
    <property type="term" value="F:iron ion binding"/>
    <property type="evidence" value="ECO:0007669"/>
    <property type="project" value="InterPro"/>
</dbReference>
<dbReference type="GO" id="GO:0003958">
    <property type="term" value="F:NADPH-hemoprotein reductase activity"/>
    <property type="evidence" value="ECO:0007669"/>
    <property type="project" value="UniProtKB-EC"/>
</dbReference>
<dbReference type="CDD" id="cd06206">
    <property type="entry name" value="bifunctional_CYPOR"/>
    <property type="match status" value="1"/>
</dbReference>
<dbReference type="CDD" id="cd11068">
    <property type="entry name" value="CYP120A1"/>
    <property type="match status" value="1"/>
</dbReference>
<dbReference type="FunFam" id="1.10.630.10:FF:000040">
    <property type="entry name" value="Bifunctional cytochrome P450/NADPH--P450 reductase"/>
    <property type="match status" value="1"/>
</dbReference>
<dbReference type="Gene3D" id="3.40.50.360">
    <property type="match status" value="1"/>
</dbReference>
<dbReference type="Gene3D" id="1.10.630.10">
    <property type="entry name" value="Cytochrome P450"/>
    <property type="match status" value="1"/>
</dbReference>
<dbReference type="Gene3D" id="1.20.990.10">
    <property type="entry name" value="NADPH-cytochrome p450 Reductase, Chain A, domain 3"/>
    <property type="match status" value="1"/>
</dbReference>
<dbReference type="Gene3D" id="3.40.50.80">
    <property type="entry name" value="Nucleotide-binding domain of ferredoxin-NADP reductase (FNR) module"/>
    <property type="match status" value="1"/>
</dbReference>
<dbReference type="Gene3D" id="2.40.30.10">
    <property type="entry name" value="Translation factors"/>
    <property type="match status" value="1"/>
</dbReference>
<dbReference type="InterPro" id="IPR023206">
    <property type="entry name" value="Bifunctional_P450_P450_red"/>
</dbReference>
<dbReference type="InterPro" id="IPR003097">
    <property type="entry name" value="CysJ-like_FAD-binding"/>
</dbReference>
<dbReference type="InterPro" id="IPR001128">
    <property type="entry name" value="Cyt_P450"/>
</dbReference>
<dbReference type="InterPro" id="IPR017972">
    <property type="entry name" value="Cyt_P450_CS"/>
</dbReference>
<dbReference type="InterPro" id="IPR002401">
    <property type="entry name" value="Cyt_P450_E_grp-I"/>
</dbReference>
<dbReference type="InterPro" id="IPR036396">
    <property type="entry name" value="Cyt_P450_sf"/>
</dbReference>
<dbReference type="InterPro" id="IPR017927">
    <property type="entry name" value="FAD-bd_FR_type"/>
</dbReference>
<dbReference type="InterPro" id="IPR008254">
    <property type="entry name" value="Flavodoxin/NO_synth"/>
</dbReference>
<dbReference type="InterPro" id="IPR029039">
    <property type="entry name" value="Flavoprotein-like_sf"/>
</dbReference>
<dbReference type="InterPro" id="IPR039261">
    <property type="entry name" value="FNR_nucleotide-bd"/>
</dbReference>
<dbReference type="InterPro" id="IPR023173">
    <property type="entry name" value="NADPH_Cyt_P450_Rdtase_alpha"/>
</dbReference>
<dbReference type="InterPro" id="IPR001433">
    <property type="entry name" value="OxRdtase_FAD/NAD-bd"/>
</dbReference>
<dbReference type="InterPro" id="IPR017938">
    <property type="entry name" value="Riboflavin_synthase-like_b-brl"/>
</dbReference>
<dbReference type="PANTHER" id="PTHR19384:SF127">
    <property type="entry name" value="BIFUNCTIONAL CYTOCHROME P450_NADPH--P450 REDUCTASE"/>
    <property type="match status" value="1"/>
</dbReference>
<dbReference type="PANTHER" id="PTHR19384">
    <property type="entry name" value="NITRIC OXIDE SYNTHASE-RELATED"/>
    <property type="match status" value="1"/>
</dbReference>
<dbReference type="Pfam" id="PF00667">
    <property type="entry name" value="FAD_binding_1"/>
    <property type="match status" value="1"/>
</dbReference>
<dbReference type="Pfam" id="PF00258">
    <property type="entry name" value="Flavodoxin_1"/>
    <property type="match status" value="1"/>
</dbReference>
<dbReference type="Pfam" id="PF00175">
    <property type="entry name" value="NAD_binding_1"/>
    <property type="match status" value="1"/>
</dbReference>
<dbReference type="Pfam" id="PF00067">
    <property type="entry name" value="p450"/>
    <property type="match status" value="1"/>
</dbReference>
<dbReference type="PIRSF" id="PIRSF000209">
    <property type="entry name" value="Bifunctional_P450_P450R"/>
    <property type="match status" value="1"/>
</dbReference>
<dbReference type="PRINTS" id="PR00463">
    <property type="entry name" value="EP450I"/>
</dbReference>
<dbReference type="PRINTS" id="PR00385">
    <property type="entry name" value="P450"/>
</dbReference>
<dbReference type="SUPFAM" id="SSF48264">
    <property type="entry name" value="Cytochrome P450"/>
    <property type="match status" value="1"/>
</dbReference>
<dbReference type="SUPFAM" id="SSF52343">
    <property type="entry name" value="Ferredoxin reductase-like, C-terminal NADP-linked domain"/>
    <property type="match status" value="1"/>
</dbReference>
<dbReference type="SUPFAM" id="SSF52218">
    <property type="entry name" value="Flavoproteins"/>
    <property type="match status" value="1"/>
</dbReference>
<dbReference type="SUPFAM" id="SSF63380">
    <property type="entry name" value="Riboflavin synthase domain-like"/>
    <property type="match status" value="1"/>
</dbReference>
<dbReference type="PROSITE" id="PS00086">
    <property type="entry name" value="CYTOCHROME_P450"/>
    <property type="match status" value="1"/>
</dbReference>
<dbReference type="PROSITE" id="PS51384">
    <property type="entry name" value="FAD_FR"/>
    <property type="match status" value="1"/>
</dbReference>
<dbReference type="PROSITE" id="PS50902">
    <property type="entry name" value="FLAVODOXIN_LIKE"/>
    <property type="match status" value="1"/>
</dbReference>
<accession>A0A3G9HRC2</accession>
<protein>
    <recommendedName>
        <fullName evidence="3">Bifunctional cytochrome P450/NADPH--P450 reductase ALT2</fullName>
    </recommendedName>
    <alternativeName>
        <fullName evidence="10">AAL-toxin biosynthesis cluster protein 2</fullName>
    </alternativeName>
    <domain>
        <recommendedName>
            <fullName evidence="3">Cytochrome P450 monooxygenase</fullName>
            <ecNumber evidence="3">1.14.14.1</ecNumber>
        </recommendedName>
    </domain>
    <domain>
        <recommendedName>
            <fullName evidence="3">NADPH--cytochrome P450 reductase</fullName>
            <ecNumber evidence="3">1.6.2.4</ecNumber>
        </recommendedName>
    </domain>
</protein>
<reference key="1">
    <citation type="submission" date="2014-06" db="EMBL/GenBank/DDBJ databases">
        <title>AAL-toxin biosynthetic genes cluster in the tomato pathotype of Alternaria alternata.</title>
        <authorList>
            <person name="Akagi Y."/>
            <person name="Akamatsu H."/>
            <person name="Takao K."/>
            <person name="Tsuge T."/>
            <person name="Kodama M."/>
        </authorList>
    </citation>
    <scope>NUCLEOTIDE SEQUENCE [GENOMIC DNA]</scope>
    <source>
        <strain>As-27</strain>
    </source>
</reference>
<reference key="2">
    <citation type="journal article" date="2008" name="J. Nat. Prod.">
        <title>Functional complementation of fumonisin biosynthesis in FUM1-disrupted fusarium verticillioides by the AAL-toxin polyketide synthase gene ALT1 from Alternaria alternata f. sp. Lycopersici.</title>
        <authorList>
            <person name="Zhu X."/>
            <person name="Vogeler C."/>
            <person name="Du L."/>
        </authorList>
    </citation>
    <scope>FUNCTION</scope>
</reference>
<reference key="3">
    <citation type="journal article" date="2009" name="Eukaryot. Cell">
        <title>Horizontal chromosome transfer, a mechanism for the evolution and differentiation of a plant-pathogenic fungus.</title>
        <authorList>
            <person name="Akagi Y."/>
            <person name="Akamatsu H."/>
            <person name="Otani H."/>
            <person name="Kodama M."/>
        </authorList>
    </citation>
    <scope>FUNCTION</scope>
</reference>
<reference key="4">
    <citation type="journal article" date="2009" name="J. Nat. Prod.">
        <title>Introduction of the AAL-toxin polyketide synthase gene ALT1 into FUM1-disrupted Fusarium verticillioides produces metabolites with the fumonisin methylation pattern.</title>
        <authorList>
            <person name="Li Y."/>
            <person name="Shen Y."/>
            <person name="Zhu X."/>
            <person name="Du L."/>
        </authorList>
    </citation>
    <scope>FUNCTION</scope>
</reference>
<reference key="5">
    <citation type="journal article" date="2012" name="J. Plant Pathol. Microbiol.">
        <title>Functional analysis of the ceramide synthase gene ALT7, a homolog of the disease resistance gene Asc1, in the plant pathogen Alternaria alternata.</title>
        <authorList>
            <person name="Kheder A.A."/>
            <person name="Akagi Y."/>
            <person name="Tsuge T."/>
            <person name="Kodama M."/>
        </authorList>
    </citation>
    <scope>FUNCTION</scope>
</reference>
<proteinExistence type="inferred from homology"/>
<keyword id="KW-0249">Electron transport</keyword>
<keyword id="KW-0274">FAD</keyword>
<keyword id="KW-0285">Flavoprotein</keyword>
<keyword id="KW-0288">FMN</keyword>
<keyword id="KW-0349">Heme</keyword>
<keyword id="KW-0408">Iron</keyword>
<keyword id="KW-0479">Metal-binding</keyword>
<keyword id="KW-0503">Monooxygenase</keyword>
<keyword id="KW-0511">Multifunctional enzyme</keyword>
<keyword id="KW-0521">NADP</keyword>
<keyword id="KW-0560">Oxidoreductase</keyword>
<keyword id="KW-0813">Transport</keyword>
<name>ALT2_ALTAL</name>
<feature type="chain" id="PRO_0000449850" description="Bifunctional cytochrome P450/NADPH--P450 reductase ALT2">
    <location>
        <begin position="1"/>
        <end position="1103"/>
    </location>
</feature>
<feature type="domain" description="Flavodoxin-like" evidence="4">
    <location>
        <begin position="506"/>
        <end position="648"/>
    </location>
</feature>
<feature type="domain" description="FAD-binding FR-type" evidence="5">
    <location>
        <begin position="688"/>
        <end position="932"/>
    </location>
</feature>
<feature type="region of interest" description="Cytochrome P450" evidence="3">
    <location>
        <begin position="16"/>
        <end position="483"/>
    </location>
</feature>
<feature type="region of interest" description="NADPH-P-450 reductase" evidence="3">
    <location>
        <begin position="484"/>
        <end position="1103"/>
    </location>
</feature>
<feature type="binding site" description="axial binding residue" evidence="1">
    <location>
        <position position="412"/>
    </location>
    <ligand>
        <name>heme</name>
        <dbReference type="ChEBI" id="CHEBI:30413"/>
    </ligand>
    <ligandPart>
        <name>Fe</name>
        <dbReference type="ChEBI" id="CHEBI:18248"/>
    </ligandPart>
</feature>
<feature type="binding site" evidence="4">
    <location>
        <begin position="512"/>
        <end position="516"/>
    </location>
    <ligand>
        <name>FMN</name>
        <dbReference type="ChEBI" id="CHEBI:58210"/>
    </ligand>
</feature>
<feature type="binding site" evidence="2">
    <location>
        <begin position="560"/>
        <end position="563"/>
    </location>
    <ligand>
        <name>FMN</name>
        <dbReference type="ChEBI" id="CHEBI:58210"/>
    </ligand>
</feature>
<feature type="binding site" evidence="4">
    <location>
        <begin position="591"/>
        <end position="623"/>
    </location>
    <ligand>
        <name>FMN</name>
        <dbReference type="ChEBI" id="CHEBI:58210"/>
    </ligand>
</feature>
<feature type="site" description="Important for catalytic activity" evidence="2">
    <location>
        <position position="278"/>
    </location>
</feature>
<comment type="function">
    <text evidence="6 7 8 9 12">Bifunctional cytochrome P450/NADPH--P450 reductase; part of the gene cluster that mediates the biosynthesis of the host-selective toxins (HSTs) AAL-toxins, sphinganine-analog mycotoxins responsible for Alternaria stem canker on tomato by the tomato pathotype (PubMed:18435561, PubMed:19449880, PubMed:19749175). The biosynthesis starts with the polyketide synthase ALT1-catalyzed C-16 carbon chain assembly from one starter acetyl-CoA unit with malonyl-CoA extender units (PubMed:18435561, PubMed:19449880). ALT1 also selectively transfers methyl groups at the first and the third cycle of chain elongation for AAL toxin (PubMed:19449880). The C-16 polyketide chain is released from the enzyme by a nucleophilic attack of a carbanion, which is derived from R-carbon of glycin by decarboxylation, on the carbonyl carbon of polyketide acyl chain (Probable). This step is probably catalyzed by a pyridoxal 5'-phosphate-dependent aminoacyl transferase ALT4 (Probable). The respective functions of the other enzymes encoded by the cluster have still to be elucidated (Probable). The sphingosine N-acyltransferase-like protein ALT7 seems not to act as a resistance/self-tolerance factor against the toxin in the toxin biosynthetic gene cluster, contrary to what is expected (Ref.5).</text>
</comment>
<comment type="catalytic activity">
    <reaction evidence="3">
        <text>an organic molecule + reduced [NADPH--hemoprotein reductase] + O2 = an alcohol + oxidized [NADPH--hemoprotein reductase] + H2O + H(+)</text>
        <dbReference type="Rhea" id="RHEA:17149"/>
        <dbReference type="Rhea" id="RHEA-COMP:11964"/>
        <dbReference type="Rhea" id="RHEA-COMP:11965"/>
        <dbReference type="ChEBI" id="CHEBI:15377"/>
        <dbReference type="ChEBI" id="CHEBI:15378"/>
        <dbReference type="ChEBI" id="CHEBI:15379"/>
        <dbReference type="ChEBI" id="CHEBI:30879"/>
        <dbReference type="ChEBI" id="CHEBI:57618"/>
        <dbReference type="ChEBI" id="CHEBI:58210"/>
        <dbReference type="ChEBI" id="CHEBI:142491"/>
        <dbReference type="EC" id="1.14.14.1"/>
    </reaction>
</comment>
<comment type="catalytic activity">
    <reaction evidence="3">
        <text>2 oxidized [cytochrome P450] + NADPH = 2 reduced [cytochrome P450] + NADP(+) + H(+)</text>
        <dbReference type="Rhea" id="RHEA:24040"/>
        <dbReference type="Rhea" id="RHEA-COMP:14627"/>
        <dbReference type="Rhea" id="RHEA-COMP:14628"/>
        <dbReference type="ChEBI" id="CHEBI:15378"/>
        <dbReference type="ChEBI" id="CHEBI:55376"/>
        <dbReference type="ChEBI" id="CHEBI:57783"/>
        <dbReference type="ChEBI" id="CHEBI:58349"/>
        <dbReference type="ChEBI" id="CHEBI:60344"/>
        <dbReference type="EC" id="1.6.2.4"/>
    </reaction>
</comment>
<comment type="cofactor">
    <cofactor evidence="3">
        <name>FAD</name>
        <dbReference type="ChEBI" id="CHEBI:57692"/>
    </cofactor>
    <text evidence="3">Binds 1 FAD.</text>
</comment>
<comment type="cofactor">
    <cofactor evidence="3">
        <name>FMN</name>
        <dbReference type="ChEBI" id="CHEBI:58210"/>
    </cofactor>
    <text evidence="3">Binds 1 FMN.</text>
</comment>
<comment type="cofactor">
    <cofactor evidence="1">
        <name>heme</name>
        <dbReference type="ChEBI" id="CHEBI:30413"/>
    </cofactor>
</comment>
<comment type="pathway">
    <text evidence="3">Mycotoxin biosynthesis.</text>
</comment>
<comment type="miscellaneous">
    <text evidence="8">Gene clusters encoding host-selective toxins (HSTs) are localized on conditionally dispensable chromosomes (CDCs), also called supernumerary chromosomes, where they are present in multiple copies. The CDCs are not essential for saprophytic growth but controls host-selective pathogenicity.</text>
</comment>
<comment type="similarity">
    <text evidence="11">In the N-terminal section; belongs to the cytochrome P450 family.</text>
</comment>
<sequence length="1103" mass="122186">MAISSPSQARSVGNPSPRCVKSSTYPFLGNILDIDPDNFTKSLGDVYMINYGSYRDVIVTSRKVAQELCDESRFCKLPGGAIDRMKRVIGNGLFTAETRDPRWQSAHRVIAPLFNPMRIRGMMDDMRDVCEQMCLRWARFGPGVPIKICDEMTKLTLDTIALCTVDHRFNSFYRPDGIEEPFAEAVVNVMTDSLIQSNLPDWINNWVRFRSMNKFNRQADELRHAIEELIESRRKNPVDRNDLLNAMLSHEDPETGQRLSDELVVDNLLTFFIAGHETTSSLLSFCMYYLLECPDVLQKARAEVHATVGTSTIMPEHLSKLPYLESVLRETLRLRDPGPGFFVKPLRDDVIAGKYFVKKDQSIFIVFDSVHRDPDVYGDDADEFRPERMSQEKFDQLPPCAYKPFGNGVRACIGRPFAMQQAILAVAMILQHFDLIKDESYKLKIHVTMTVRPIGLTMKVRPREGLRATDVNLRMHQASGTATPKPLASGTDGSMLTVTKNGPMHLAIVHASNSGTSEALAGLLASNAVDRGLGVKSISVANDIVEKLPRDVPVVIITASYNGEPSRNAADFVSWLKSTKQHELEGVRYAVFGCGHRDWASSLFAVPKLIDSLLSTNGAEQIAQMGTSDTGGSTDIYSDFEDWTTKFLFPYLNSKQEMKDTKLNSGADTRDVDLHVSLGKPPRVAMRKGFAAATVTKNRSLSAPGVPEKCELELCLPDGFTYKAGDHLQILPRNSSNDVQSVLRHFHLEAETLVSIQSAHRNKRLGLPLDVPIMASELFAAYVELGRTASSRNIHVLAGLVRSDKPKIKRILLSLANGESYKTEVLDKRISVLDLLKQFPDIEISLAGFLSLLMPIRPRSYSFSSGPNWKPGFATLTYTVVGAGKLVSKAKMTEHVAMSMRGGLASTFLSTLSARDDLYVSLDPASPSFYDDQSVSCPIIMIAAGTGIAPFIGFLQERKLSLAHTALLQGSKKAGPYARTLLFFGCRGPALDSLYTEELAAFEADGLVEVRRAFSRDHTAAGSNGCKYVDQRLAASAEELVELWRLGARVFVCGGKKMANNVFDVLGPLFHEADKLDQKTAEDDVGKWRTTLGKGRYAEEIFI</sequence>
<evidence type="ECO:0000250" key="1">
    <source>
        <dbReference type="UniProtKB" id="P04798"/>
    </source>
</evidence>
<evidence type="ECO:0000250" key="2">
    <source>
        <dbReference type="UniProtKB" id="P14779"/>
    </source>
</evidence>
<evidence type="ECO:0000250" key="3">
    <source>
        <dbReference type="UniProtKB" id="Q9Y8G7"/>
    </source>
</evidence>
<evidence type="ECO:0000255" key="4">
    <source>
        <dbReference type="PROSITE-ProRule" id="PRU00088"/>
    </source>
</evidence>
<evidence type="ECO:0000255" key="5">
    <source>
        <dbReference type="PROSITE-ProRule" id="PRU00716"/>
    </source>
</evidence>
<evidence type="ECO:0000269" key="6">
    <source>
    </source>
</evidence>
<evidence type="ECO:0000269" key="7">
    <source>
    </source>
</evidence>
<evidence type="ECO:0000269" key="8">
    <source>
    </source>
</evidence>
<evidence type="ECO:0000269" key="9">
    <source ref="5"/>
</evidence>
<evidence type="ECO:0000303" key="10">
    <source ref="1"/>
</evidence>
<evidence type="ECO:0000305" key="11"/>
<evidence type="ECO:0000305" key="12">
    <source>
    </source>
</evidence>
<gene>
    <name evidence="10" type="primary">ALT2</name>
</gene>